<reference key="1">
    <citation type="journal article" date="1996" name="Mol. Microbiol.">
        <title>A glutamate/glutamine/aspartate/asparagine transport operon in Rhodobacter capsulatus.</title>
        <authorList>
            <person name="Zheng S."/>
            <person name="Haselkorn R."/>
        </authorList>
    </citation>
    <scope>NUCLEOTIDE SEQUENCE [GENOMIC DNA]</scope>
    <source>
        <strain>ATCC BAA-309 / NBRC 16581 / SB1003</strain>
    </source>
</reference>
<reference key="2">
    <citation type="journal article" date="2010" name="J. Bacteriol.">
        <title>Complete genome sequence of the photosynthetic purple nonsulfur bacterium Rhodobacter capsulatus SB 1003.</title>
        <authorList>
            <person name="Strnad H."/>
            <person name="Lapidus A."/>
            <person name="Paces J."/>
            <person name="Ulbrich P."/>
            <person name="Vlcek C."/>
            <person name="Paces V."/>
            <person name="Haselkorn R."/>
        </authorList>
    </citation>
    <scope>NUCLEOTIDE SEQUENCE [LARGE SCALE GENOMIC DNA]</scope>
    <source>
        <strain>ATCC BAA-309 / NBRC 16581 / SB1003</strain>
    </source>
</reference>
<name>BZTC_RHOCB</name>
<comment type="function">
    <text>Part of a binding-protein-dependent transport system for glutamate, glutamine, aspartate and asparagine. Probably responsible for the translocation of the substrate across the membrane.</text>
</comment>
<comment type="subunit">
    <text evidence="2">BztB and BztC form a heterodimer which can form a membrane complex with a homodimer of BztD.</text>
</comment>
<comment type="subcellular location">
    <subcellularLocation>
        <location evidence="2">Cell inner membrane</location>
        <topology evidence="2">Multi-pass membrane protein</topology>
    </subcellularLocation>
</comment>
<comment type="similarity">
    <text evidence="2">Belongs to the binding-protein-dependent transport system permease family. HisMQ subfamily.</text>
</comment>
<keyword id="KW-0029">Amino-acid transport</keyword>
<keyword id="KW-0997">Cell inner membrane</keyword>
<keyword id="KW-1003">Cell membrane</keyword>
<keyword id="KW-0472">Membrane</keyword>
<keyword id="KW-1185">Reference proteome</keyword>
<keyword id="KW-0812">Transmembrane</keyword>
<keyword id="KW-1133">Transmembrane helix</keyword>
<keyword id="KW-0813">Transport</keyword>
<proteinExistence type="inferred from homology"/>
<organism>
    <name type="scientific">Rhodobacter capsulatus (strain ATCC BAA-309 / NBRC 16581 / SB1003)</name>
    <dbReference type="NCBI Taxonomy" id="272942"/>
    <lineage>
        <taxon>Bacteria</taxon>
        <taxon>Pseudomonadati</taxon>
        <taxon>Pseudomonadota</taxon>
        <taxon>Alphaproteobacteria</taxon>
        <taxon>Rhodobacterales</taxon>
        <taxon>Rhodobacter group</taxon>
        <taxon>Rhodobacter</taxon>
    </lineage>
</organism>
<gene>
    <name type="primary">bztC</name>
    <name type="ordered locus">RCAP_rcc00337</name>
</gene>
<accession>Q52665</accession>
<accession>D5AM32</accession>
<feature type="chain" id="PRO_0000059986" description="Glutamate/glutamine/aspartate/asparagine transport system permease protein BztC">
    <location>
        <begin position="1"/>
        <end position="434"/>
    </location>
</feature>
<feature type="transmembrane region" description="Helical" evidence="1">
    <location>
        <begin position="41"/>
        <end position="61"/>
    </location>
</feature>
<feature type="transmembrane region" description="Helical" evidence="1">
    <location>
        <begin position="113"/>
        <end position="133"/>
    </location>
</feature>
<feature type="transmembrane region" description="Helical" evidence="1">
    <location>
        <begin position="135"/>
        <end position="155"/>
    </location>
</feature>
<feature type="transmembrane region" description="Helical" evidence="1">
    <location>
        <begin position="156"/>
        <end position="176"/>
    </location>
</feature>
<feature type="transmembrane region" description="Helical" evidence="1">
    <location>
        <begin position="180"/>
        <end position="200"/>
    </location>
</feature>
<feature type="transmembrane region" description="Helical" evidence="1">
    <location>
        <begin position="227"/>
        <end position="247"/>
    </location>
</feature>
<feature type="transmembrane region" description="Helical" evidence="1">
    <location>
        <begin position="272"/>
        <end position="292"/>
    </location>
</feature>
<feature type="transmembrane region" description="Helical" evidence="1">
    <location>
        <begin position="298"/>
        <end position="318"/>
    </location>
</feature>
<feature type="transmembrane region" description="Helical" evidence="1">
    <location>
        <begin position="360"/>
        <end position="380"/>
    </location>
</feature>
<feature type="transmembrane region" description="Helical" evidence="1">
    <location>
        <begin position="398"/>
        <end position="418"/>
    </location>
</feature>
<feature type="domain" description="ABC transmembrane type-1" evidence="1">
    <location>
        <begin position="227"/>
        <end position="422"/>
    </location>
</feature>
<dbReference type="EMBL" id="U37407">
    <property type="protein sequence ID" value="AAB17888.1"/>
    <property type="molecule type" value="Genomic_DNA"/>
</dbReference>
<dbReference type="EMBL" id="CP001312">
    <property type="protein sequence ID" value="ADE84102.1"/>
    <property type="molecule type" value="Genomic_DNA"/>
</dbReference>
<dbReference type="PIR" id="S77607">
    <property type="entry name" value="S77607"/>
</dbReference>
<dbReference type="RefSeq" id="WP_013066082.1">
    <property type="nucleotide sequence ID" value="NC_014034.1"/>
</dbReference>
<dbReference type="SMR" id="Q52665"/>
<dbReference type="STRING" id="272942.RCAP_rcc00337"/>
<dbReference type="TCDB" id="3.A.1.3.7">
    <property type="family name" value="the atp-binding cassette (abc) superfamily"/>
</dbReference>
<dbReference type="GeneID" id="31489294"/>
<dbReference type="KEGG" id="rcp:RCAP_rcc00337"/>
<dbReference type="eggNOG" id="COG0765">
    <property type="taxonomic scope" value="Bacteria"/>
</dbReference>
<dbReference type="HOGENOM" id="CLU_019602_16_1_5"/>
<dbReference type="OrthoDB" id="9771188at2"/>
<dbReference type="Proteomes" id="UP000002361">
    <property type="component" value="Chromosome"/>
</dbReference>
<dbReference type="GO" id="GO:0043190">
    <property type="term" value="C:ATP-binding cassette (ABC) transporter complex"/>
    <property type="evidence" value="ECO:0007669"/>
    <property type="project" value="InterPro"/>
</dbReference>
<dbReference type="GO" id="GO:0022857">
    <property type="term" value="F:transmembrane transporter activity"/>
    <property type="evidence" value="ECO:0007669"/>
    <property type="project" value="InterPro"/>
</dbReference>
<dbReference type="GO" id="GO:0006865">
    <property type="term" value="P:amino acid transport"/>
    <property type="evidence" value="ECO:0007669"/>
    <property type="project" value="UniProtKB-KW"/>
</dbReference>
<dbReference type="CDD" id="cd06261">
    <property type="entry name" value="TM_PBP2"/>
    <property type="match status" value="1"/>
</dbReference>
<dbReference type="Gene3D" id="1.10.3720.10">
    <property type="entry name" value="MetI-like"/>
    <property type="match status" value="1"/>
</dbReference>
<dbReference type="InterPro" id="IPR010065">
    <property type="entry name" value="AA_ABC_transptr_permease_3TM"/>
</dbReference>
<dbReference type="InterPro" id="IPR043429">
    <property type="entry name" value="ArtM/GltK/GlnP/TcyL/YhdX-like"/>
</dbReference>
<dbReference type="InterPro" id="IPR000515">
    <property type="entry name" value="MetI-like"/>
</dbReference>
<dbReference type="InterPro" id="IPR035906">
    <property type="entry name" value="MetI-like_sf"/>
</dbReference>
<dbReference type="NCBIfam" id="TIGR01726">
    <property type="entry name" value="HEQRo_perm_3TM"/>
    <property type="match status" value="1"/>
</dbReference>
<dbReference type="PANTHER" id="PTHR30614:SF41">
    <property type="entry name" value="INNER MEMBRANE AMINO-ACID ABC TRANSPORTER PERMEASE PROTEIN YHDY"/>
    <property type="match status" value="1"/>
</dbReference>
<dbReference type="PANTHER" id="PTHR30614">
    <property type="entry name" value="MEMBRANE COMPONENT OF AMINO ACID ABC TRANSPORTER"/>
    <property type="match status" value="1"/>
</dbReference>
<dbReference type="Pfam" id="PF00528">
    <property type="entry name" value="BPD_transp_1"/>
    <property type="match status" value="1"/>
</dbReference>
<dbReference type="SUPFAM" id="SSF161098">
    <property type="entry name" value="MetI-like"/>
    <property type="match status" value="1"/>
</dbReference>
<dbReference type="PROSITE" id="PS50928">
    <property type="entry name" value="ABC_TM1"/>
    <property type="match status" value="1"/>
</dbReference>
<evidence type="ECO:0000255" key="1">
    <source>
        <dbReference type="PROSITE-ProRule" id="PRU00441"/>
    </source>
</evidence>
<evidence type="ECO:0000305" key="2"/>
<sequence length="434" mass="47683">MSDTSFVRTEMLAPRPAPVSQVGAIKWMRENLFSGPLNTALTVFGLLATVWLVQAAAPWLLHGVWNANSLTECRAIIAERWGPEATGACWAVIRVRWNQFLFGFYPVDQYWRLFVTFAGLFLALAPVLFDALPRKLIWGTLLYPLAAFWLLWGGPIWGPVSVLAGFAILGLLFTALAPKLGVPVSAGIGLVVAALFWLYAAAPIEAALQSALPLALPEVDSDQFGGFLLALVIGVTAIVVSLPLGILLALGRQSDMLIVKSLSVGIIEFVRGVPLITLLFTASLLLQYFLPPGTNFDLILRVVILVTLFAAAYIAEVIRGGLAALPRGQYEAADALGLDYWQAQRLIIMPQALKISIPGIVSSFIGLFKDTTLVAFVGLFDPLKGISNVVRSDMAWKGTYWEPYIFVALIFFLFNFSMSRYSMYLERKLKRDHR</sequence>
<protein>
    <recommendedName>
        <fullName>Glutamate/glutamine/aspartate/asparagine transport system permease protein BztC</fullName>
    </recommendedName>
</protein>